<feature type="chain" id="PRO_1000056966" description="DNA gyrase inhibitor YacG">
    <location>
        <begin position="1"/>
        <end position="64"/>
    </location>
</feature>
<feature type="region of interest" description="Disordered" evidence="2">
    <location>
        <begin position="44"/>
        <end position="64"/>
    </location>
</feature>
<feature type="binding site" evidence="1">
    <location>
        <position position="7"/>
    </location>
    <ligand>
        <name>Zn(2+)</name>
        <dbReference type="ChEBI" id="CHEBI:29105"/>
    </ligand>
</feature>
<feature type="binding site" evidence="1">
    <location>
        <position position="10"/>
    </location>
    <ligand>
        <name>Zn(2+)</name>
        <dbReference type="ChEBI" id="CHEBI:29105"/>
    </ligand>
</feature>
<feature type="binding site" evidence="1">
    <location>
        <position position="26"/>
    </location>
    <ligand>
        <name>Zn(2+)</name>
        <dbReference type="ChEBI" id="CHEBI:29105"/>
    </ligand>
</feature>
<feature type="binding site" evidence="1">
    <location>
        <position position="30"/>
    </location>
    <ligand>
        <name>Zn(2+)</name>
        <dbReference type="ChEBI" id="CHEBI:29105"/>
    </ligand>
</feature>
<gene>
    <name evidence="1" type="primary">yacG</name>
    <name type="ordered locus">AHA_3874</name>
</gene>
<dbReference type="EMBL" id="CP000462">
    <property type="protein sequence ID" value="ABK38781.1"/>
    <property type="molecule type" value="Genomic_DNA"/>
</dbReference>
<dbReference type="RefSeq" id="WP_005305661.1">
    <property type="nucleotide sequence ID" value="NC_008570.1"/>
</dbReference>
<dbReference type="RefSeq" id="YP_858313.1">
    <property type="nucleotide sequence ID" value="NC_008570.1"/>
</dbReference>
<dbReference type="SMR" id="A0KPW2"/>
<dbReference type="STRING" id="380703.AHA_3874"/>
<dbReference type="EnsemblBacteria" id="ABK38781">
    <property type="protein sequence ID" value="ABK38781"/>
    <property type="gene ID" value="AHA_3874"/>
</dbReference>
<dbReference type="GeneID" id="4490844"/>
<dbReference type="KEGG" id="aha:AHA_3874"/>
<dbReference type="PATRIC" id="fig|380703.7.peg.3844"/>
<dbReference type="eggNOG" id="COG3024">
    <property type="taxonomic scope" value="Bacteria"/>
</dbReference>
<dbReference type="HOGENOM" id="CLU_178280_1_0_6"/>
<dbReference type="OrthoDB" id="9809663at2"/>
<dbReference type="PRO" id="PR:A0KPW2"/>
<dbReference type="Proteomes" id="UP000000756">
    <property type="component" value="Chromosome"/>
</dbReference>
<dbReference type="GO" id="GO:0008657">
    <property type="term" value="F:DNA topoisomerase type II (double strand cut, ATP-hydrolyzing) inhibitor activity"/>
    <property type="evidence" value="ECO:0007669"/>
    <property type="project" value="UniProtKB-UniRule"/>
</dbReference>
<dbReference type="GO" id="GO:0008270">
    <property type="term" value="F:zinc ion binding"/>
    <property type="evidence" value="ECO:0007669"/>
    <property type="project" value="UniProtKB-UniRule"/>
</dbReference>
<dbReference type="GO" id="GO:0006355">
    <property type="term" value="P:regulation of DNA-templated transcription"/>
    <property type="evidence" value="ECO:0007669"/>
    <property type="project" value="InterPro"/>
</dbReference>
<dbReference type="Gene3D" id="3.30.50.10">
    <property type="entry name" value="Erythroid Transcription Factor GATA-1, subunit A"/>
    <property type="match status" value="1"/>
</dbReference>
<dbReference type="HAMAP" id="MF_00649">
    <property type="entry name" value="DNA_gyrase_inhibitor_YacG"/>
    <property type="match status" value="1"/>
</dbReference>
<dbReference type="InterPro" id="IPR005584">
    <property type="entry name" value="DNA_gyrase_inhibitor_YacG"/>
</dbReference>
<dbReference type="InterPro" id="IPR013088">
    <property type="entry name" value="Znf_NHR/GATA"/>
</dbReference>
<dbReference type="NCBIfam" id="NF001638">
    <property type="entry name" value="PRK00418.1"/>
    <property type="match status" value="1"/>
</dbReference>
<dbReference type="PANTHER" id="PTHR36150">
    <property type="entry name" value="DNA GYRASE INHIBITOR YACG"/>
    <property type="match status" value="1"/>
</dbReference>
<dbReference type="PANTHER" id="PTHR36150:SF1">
    <property type="entry name" value="DNA GYRASE INHIBITOR YACG"/>
    <property type="match status" value="1"/>
</dbReference>
<dbReference type="Pfam" id="PF03884">
    <property type="entry name" value="YacG"/>
    <property type="match status" value="1"/>
</dbReference>
<dbReference type="SUPFAM" id="SSF57716">
    <property type="entry name" value="Glucocorticoid receptor-like (DNA-binding domain)"/>
    <property type="match status" value="1"/>
</dbReference>
<accession>A0KPW2</accession>
<organism>
    <name type="scientific">Aeromonas hydrophila subsp. hydrophila (strain ATCC 7966 / DSM 30187 / BCRC 13018 / CCUG 14551 / JCM 1027 / KCTC 2358 / NCIMB 9240 / NCTC 8049)</name>
    <dbReference type="NCBI Taxonomy" id="380703"/>
    <lineage>
        <taxon>Bacteria</taxon>
        <taxon>Pseudomonadati</taxon>
        <taxon>Pseudomonadota</taxon>
        <taxon>Gammaproteobacteria</taxon>
        <taxon>Aeromonadales</taxon>
        <taxon>Aeromonadaceae</taxon>
        <taxon>Aeromonas</taxon>
    </lineage>
</organism>
<comment type="function">
    <text evidence="1">Inhibits all the catalytic activities of DNA gyrase by preventing its interaction with DNA. Acts by binding directly to the C-terminal domain of GyrB, which probably disrupts DNA binding by the gyrase.</text>
</comment>
<comment type="cofactor">
    <cofactor evidence="1">
        <name>Zn(2+)</name>
        <dbReference type="ChEBI" id="CHEBI:29105"/>
    </cofactor>
    <text evidence="1">Binds 1 zinc ion.</text>
</comment>
<comment type="subunit">
    <text evidence="1">Interacts with GyrB.</text>
</comment>
<comment type="similarity">
    <text evidence="1">Belongs to the DNA gyrase inhibitor YacG family.</text>
</comment>
<proteinExistence type="inferred from homology"/>
<protein>
    <recommendedName>
        <fullName evidence="1">DNA gyrase inhibitor YacG</fullName>
    </recommendedName>
</protein>
<reference key="1">
    <citation type="journal article" date="2006" name="J. Bacteriol.">
        <title>Genome sequence of Aeromonas hydrophila ATCC 7966T: jack of all trades.</title>
        <authorList>
            <person name="Seshadri R."/>
            <person name="Joseph S.W."/>
            <person name="Chopra A.K."/>
            <person name="Sha J."/>
            <person name="Shaw J."/>
            <person name="Graf J."/>
            <person name="Haft D.H."/>
            <person name="Wu M."/>
            <person name="Ren Q."/>
            <person name="Rosovitz M.J."/>
            <person name="Madupu R."/>
            <person name="Tallon L."/>
            <person name="Kim M."/>
            <person name="Jin S."/>
            <person name="Vuong H."/>
            <person name="Stine O.C."/>
            <person name="Ali A."/>
            <person name="Horneman A.J."/>
            <person name="Heidelberg J.F."/>
        </authorList>
    </citation>
    <scope>NUCLEOTIDE SEQUENCE [LARGE SCALE GENOMIC DNA]</scope>
    <source>
        <strain>ATCC 7966 / DSM 30187 / BCRC 13018 / CCUG 14551 / JCM 1027 / KCTC 2358 / NCIMB 9240 / NCTC 8049</strain>
    </source>
</reference>
<evidence type="ECO:0000255" key="1">
    <source>
        <dbReference type="HAMAP-Rule" id="MF_00649"/>
    </source>
</evidence>
<evidence type="ECO:0000256" key="2">
    <source>
        <dbReference type="SAM" id="MobiDB-lite"/>
    </source>
</evidence>
<keyword id="KW-0479">Metal-binding</keyword>
<keyword id="KW-1185">Reference proteome</keyword>
<keyword id="KW-0862">Zinc</keyword>
<name>YACG_AERHH</name>
<sequence>MVTKVKCPTCQTELEWGPQSPFRPFCSKRCQLIDLGEWADEEKRIPGEIDPELLPYPEEGEQWQ</sequence>